<protein>
    <recommendedName>
        <fullName>Metal-binding regulatory protein cuf1</fullName>
    </recommendedName>
</protein>
<evidence type="ECO:0000255" key="1">
    <source>
        <dbReference type="PROSITE-ProRule" id="PRU00055"/>
    </source>
</evidence>
<evidence type="ECO:0000256" key="2">
    <source>
        <dbReference type="SAM" id="MobiDB-lite"/>
    </source>
</evidence>
<evidence type="ECO:0000269" key="3">
    <source>
    </source>
</evidence>
<evidence type="ECO:0000269" key="4">
    <source>
    </source>
</evidence>
<name>CUF1_SCHPO</name>
<dbReference type="EMBL" id="AF175404">
    <property type="protein sequence ID" value="AAD51063.1"/>
    <property type="molecule type" value="Genomic_DNA"/>
</dbReference>
<dbReference type="EMBL" id="AJ243832">
    <property type="protein sequence ID" value="CAB52304.1"/>
    <property type="molecule type" value="Genomic_DNA"/>
</dbReference>
<dbReference type="EMBL" id="CU329670">
    <property type="protein sequence ID" value="CAA90469.1"/>
    <property type="molecule type" value="Genomic_DNA"/>
</dbReference>
<dbReference type="PIR" id="T38609">
    <property type="entry name" value="S58105"/>
</dbReference>
<dbReference type="RefSeq" id="NP_592923.1">
    <property type="nucleotide sequence ID" value="NM_001018324.2"/>
</dbReference>
<dbReference type="SMR" id="Q09728"/>
<dbReference type="BioGRID" id="279627">
    <property type="interactions" value="11"/>
</dbReference>
<dbReference type="FunCoup" id="Q09728">
    <property type="interactions" value="278"/>
</dbReference>
<dbReference type="STRING" id="284812.Q09728"/>
<dbReference type="iPTMnet" id="Q09728"/>
<dbReference type="PaxDb" id="4896-SPAC31A2.11c.1"/>
<dbReference type="EnsemblFungi" id="SPAC31A2.11c.1">
    <property type="protein sequence ID" value="SPAC31A2.11c.1:pep"/>
    <property type="gene ID" value="SPAC31A2.11c"/>
</dbReference>
<dbReference type="GeneID" id="2543198"/>
<dbReference type="KEGG" id="spo:2543198"/>
<dbReference type="PomBase" id="SPAC31A2.11c">
    <property type="gene designation" value="cuf1"/>
</dbReference>
<dbReference type="VEuPathDB" id="FungiDB:SPAC31A2.11c"/>
<dbReference type="eggNOG" id="ENOG502S7CA">
    <property type="taxonomic scope" value="Eukaryota"/>
</dbReference>
<dbReference type="HOGENOM" id="CLU_669319_0_0_1"/>
<dbReference type="InParanoid" id="Q09728"/>
<dbReference type="OMA" id="MACMKCI"/>
<dbReference type="PRO" id="PR:Q09728"/>
<dbReference type="Proteomes" id="UP000002485">
    <property type="component" value="Chromosome I"/>
</dbReference>
<dbReference type="GO" id="GO:0005737">
    <property type="term" value="C:cytoplasm"/>
    <property type="evidence" value="ECO:0000314"/>
    <property type="project" value="PomBase"/>
</dbReference>
<dbReference type="GO" id="GO:0005634">
    <property type="term" value="C:nucleus"/>
    <property type="evidence" value="ECO:0000314"/>
    <property type="project" value="PomBase"/>
</dbReference>
<dbReference type="GO" id="GO:0005507">
    <property type="term" value="F:copper ion binding"/>
    <property type="evidence" value="ECO:0000315"/>
    <property type="project" value="PomBase"/>
</dbReference>
<dbReference type="GO" id="GO:0001228">
    <property type="term" value="F:DNA-binding transcription activator activity, RNA polymerase II-specific"/>
    <property type="evidence" value="ECO:0000314"/>
    <property type="project" value="PomBase"/>
</dbReference>
<dbReference type="GO" id="GO:0000981">
    <property type="term" value="F:DNA-binding transcription factor activity, RNA polymerase II-specific"/>
    <property type="evidence" value="ECO:0000318"/>
    <property type="project" value="GO_Central"/>
</dbReference>
<dbReference type="GO" id="GO:0000978">
    <property type="term" value="F:RNA polymerase II cis-regulatory region sequence-specific DNA binding"/>
    <property type="evidence" value="ECO:0000314"/>
    <property type="project" value="PomBase"/>
</dbReference>
<dbReference type="GO" id="GO:0055070">
    <property type="term" value="P:copper ion homeostasis"/>
    <property type="evidence" value="ECO:0000315"/>
    <property type="project" value="PomBase"/>
</dbReference>
<dbReference type="GO" id="GO:0006878">
    <property type="term" value="P:intracellular copper ion homeostasis"/>
    <property type="evidence" value="ECO:0000315"/>
    <property type="project" value="PomBase"/>
</dbReference>
<dbReference type="GO" id="GO:0006879">
    <property type="term" value="P:intracellular iron ion homeostasis"/>
    <property type="evidence" value="ECO:0000315"/>
    <property type="project" value="PomBase"/>
</dbReference>
<dbReference type="GO" id="GO:0000122">
    <property type="term" value="P:negative regulation of transcription by RNA polymerase II"/>
    <property type="evidence" value="ECO:0000314"/>
    <property type="project" value="PomBase"/>
</dbReference>
<dbReference type="GO" id="GO:0045944">
    <property type="term" value="P:positive regulation of transcription by RNA polymerase II"/>
    <property type="evidence" value="ECO:0000314"/>
    <property type="project" value="PomBase"/>
</dbReference>
<dbReference type="FunFam" id="3.90.430.10:FF:000001">
    <property type="entry name" value="Copper fist DNA-binding protein"/>
    <property type="match status" value="1"/>
</dbReference>
<dbReference type="Gene3D" id="3.90.430.10">
    <property type="entry name" value="Copper fist DNA-binding domain"/>
    <property type="match status" value="1"/>
</dbReference>
<dbReference type="InterPro" id="IPR051763">
    <property type="entry name" value="Copper_Homeo_Regul"/>
</dbReference>
<dbReference type="InterPro" id="IPR001083">
    <property type="entry name" value="Cu_fist_DNA-bd_dom"/>
</dbReference>
<dbReference type="InterPro" id="IPR036395">
    <property type="entry name" value="Cu_fist_DNA-bd_dom_sf"/>
</dbReference>
<dbReference type="PANTHER" id="PTHR28088">
    <property type="entry name" value="TRANSCRIPTIONAL ACTIVATOR HAA1-RELATED"/>
    <property type="match status" value="1"/>
</dbReference>
<dbReference type="PANTHER" id="PTHR28088:SF5">
    <property type="entry name" value="TRANSCRIPTIONAL ACTIVATOR HAA1-RELATED"/>
    <property type="match status" value="1"/>
</dbReference>
<dbReference type="Pfam" id="PF00649">
    <property type="entry name" value="Copper-fist"/>
    <property type="match status" value="1"/>
</dbReference>
<dbReference type="PRINTS" id="PR00617">
    <property type="entry name" value="COPPERFIST"/>
</dbReference>
<dbReference type="SMART" id="SM01090">
    <property type="entry name" value="Copper-fist"/>
    <property type="match status" value="1"/>
</dbReference>
<dbReference type="SMART" id="SM00412">
    <property type="entry name" value="Cu_FIST"/>
    <property type="match status" value="1"/>
</dbReference>
<dbReference type="SUPFAM" id="SSF57879">
    <property type="entry name" value="Zinc domain conserved in yeast copper-regulated transcription factors"/>
    <property type="match status" value="1"/>
</dbReference>
<dbReference type="PROSITE" id="PS01119">
    <property type="entry name" value="COPPER_FIST_1"/>
    <property type="match status" value="1"/>
</dbReference>
<dbReference type="PROSITE" id="PS50073">
    <property type="entry name" value="COPPER_FIST_2"/>
    <property type="match status" value="1"/>
</dbReference>
<proteinExistence type="evidence at protein level"/>
<reference key="1">
    <citation type="journal article" date="1999" name="J. Biol. Chem.">
        <title>A copper-sensing transcription factor regulates iron uptake genes in Schizosaccharomyces pombe.</title>
        <authorList>
            <person name="Labbe S."/>
            <person name="Pena M.M.O."/>
            <person name="Fernandes A.R."/>
            <person name="Thiele D.J."/>
        </authorList>
    </citation>
    <scope>NUCLEOTIDE SEQUENCE [GENOMIC DNA]</scope>
    <scope>FUNCTION</scope>
    <source>
        <strain>FY254</strain>
    </source>
</reference>
<reference key="2">
    <citation type="journal article" date="2002" name="Nature">
        <title>The genome sequence of Schizosaccharomyces pombe.</title>
        <authorList>
            <person name="Wood V."/>
            <person name="Gwilliam R."/>
            <person name="Rajandream M.A."/>
            <person name="Lyne M.H."/>
            <person name="Lyne R."/>
            <person name="Stewart A."/>
            <person name="Sgouros J.G."/>
            <person name="Peat N."/>
            <person name="Hayles J."/>
            <person name="Baker S.G."/>
            <person name="Basham D."/>
            <person name="Bowman S."/>
            <person name="Brooks K."/>
            <person name="Brown D."/>
            <person name="Brown S."/>
            <person name="Chillingworth T."/>
            <person name="Churcher C.M."/>
            <person name="Collins M."/>
            <person name="Connor R."/>
            <person name="Cronin A."/>
            <person name="Davis P."/>
            <person name="Feltwell T."/>
            <person name="Fraser A."/>
            <person name="Gentles S."/>
            <person name="Goble A."/>
            <person name="Hamlin N."/>
            <person name="Harris D.E."/>
            <person name="Hidalgo J."/>
            <person name="Hodgson G."/>
            <person name="Holroyd S."/>
            <person name="Hornsby T."/>
            <person name="Howarth S."/>
            <person name="Huckle E.J."/>
            <person name="Hunt S."/>
            <person name="Jagels K."/>
            <person name="James K.D."/>
            <person name="Jones L."/>
            <person name="Jones M."/>
            <person name="Leather S."/>
            <person name="McDonald S."/>
            <person name="McLean J."/>
            <person name="Mooney P."/>
            <person name="Moule S."/>
            <person name="Mungall K.L."/>
            <person name="Murphy L.D."/>
            <person name="Niblett D."/>
            <person name="Odell C."/>
            <person name="Oliver K."/>
            <person name="O'Neil S."/>
            <person name="Pearson D."/>
            <person name="Quail M.A."/>
            <person name="Rabbinowitsch E."/>
            <person name="Rutherford K.M."/>
            <person name="Rutter S."/>
            <person name="Saunders D."/>
            <person name="Seeger K."/>
            <person name="Sharp S."/>
            <person name="Skelton J."/>
            <person name="Simmonds M.N."/>
            <person name="Squares R."/>
            <person name="Squares S."/>
            <person name="Stevens K."/>
            <person name="Taylor K."/>
            <person name="Taylor R.G."/>
            <person name="Tivey A."/>
            <person name="Walsh S.V."/>
            <person name="Warren T."/>
            <person name="Whitehead S."/>
            <person name="Woodward J.R."/>
            <person name="Volckaert G."/>
            <person name="Aert R."/>
            <person name="Robben J."/>
            <person name="Grymonprez B."/>
            <person name="Weltjens I."/>
            <person name="Vanstreels E."/>
            <person name="Rieger M."/>
            <person name="Schaefer M."/>
            <person name="Mueller-Auer S."/>
            <person name="Gabel C."/>
            <person name="Fuchs M."/>
            <person name="Duesterhoeft A."/>
            <person name="Fritzc C."/>
            <person name="Holzer E."/>
            <person name="Moestl D."/>
            <person name="Hilbert H."/>
            <person name="Borzym K."/>
            <person name="Langer I."/>
            <person name="Beck A."/>
            <person name="Lehrach H."/>
            <person name="Reinhardt R."/>
            <person name="Pohl T.M."/>
            <person name="Eger P."/>
            <person name="Zimmermann W."/>
            <person name="Wedler H."/>
            <person name="Wambutt R."/>
            <person name="Purnelle B."/>
            <person name="Goffeau A."/>
            <person name="Cadieu E."/>
            <person name="Dreano S."/>
            <person name="Gloux S."/>
            <person name="Lelaure V."/>
            <person name="Mottier S."/>
            <person name="Galibert F."/>
            <person name="Aves S.J."/>
            <person name="Xiang Z."/>
            <person name="Hunt C."/>
            <person name="Moore K."/>
            <person name="Hurst S.M."/>
            <person name="Lucas M."/>
            <person name="Rochet M."/>
            <person name="Gaillardin C."/>
            <person name="Tallada V.A."/>
            <person name="Garzon A."/>
            <person name="Thode G."/>
            <person name="Daga R.R."/>
            <person name="Cruzado L."/>
            <person name="Jimenez J."/>
            <person name="Sanchez M."/>
            <person name="del Rey F."/>
            <person name="Benito J."/>
            <person name="Dominguez A."/>
            <person name="Revuelta J.L."/>
            <person name="Moreno S."/>
            <person name="Armstrong J."/>
            <person name="Forsburg S.L."/>
            <person name="Cerutti L."/>
            <person name="Lowe T."/>
            <person name="McCombie W.R."/>
            <person name="Paulsen I."/>
            <person name="Potashkin J."/>
            <person name="Shpakovski G.V."/>
            <person name="Ussery D."/>
            <person name="Barrell B.G."/>
            <person name="Nurse P."/>
        </authorList>
    </citation>
    <scope>NUCLEOTIDE SEQUENCE [LARGE SCALE GENOMIC DNA]</scope>
    <source>
        <strain>972 / ATCC 24843</strain>
    </source>
</reference>
<reference key="3">
    <citation type="journal article" date="2006" name="Eukaryot. Cell">
        <title>Copper induces cytoplasmic retention of fission yeast transcription factor cuf1.</title>
        <authorList>
            <person name="Beaudoin J."/>
            <person name="Labbe S."/>
        </authorList>
    </citation>
    <scope>FUNCTION</scope>
    <scope>SUBCELLULAR LOCATION</scope>
    <scope>MUTAGENESIS OF LYS-13; ARG-16; ARG-19; LYS-24; ARG-28; LYS-45; ARG-47; ARG-50; ARG-53; CYS-328; CYS-330; CYS-334; CYS-336 AND CYS-339</scope>
</reference>
<keyword id="KW-0186">Copper</keyword>
<keyword id="KW-0963">Cytoplasm</keyword>
<keyword id="KW-0238">DNA-binding</keyword>
<keyword id="KW-0479">Metal-binding</keyword>
<keyword id="KW-0539">Nucleus</keyword>
<keyword id="KW-1185">Reference proteome</keyword>
<keyword id="KW-0804">Transcription</keyword>
<keyword id="KW-0805">Transcription regulation</keyword>
<keyword id="KW-0862">Zinc</keyword>
<sequence>MVVINNVKMACMKCIRGHRSSTCKHNDRELFPIRPKGRPISQCEKCRIARITRHLHVKCTCNSRKKGSKCSTSSTTDLDSSSASNSSCSIPSSISEKLLPRDNVKTHCPKRSASCCGKKPDVMPLKINLESQTDFMGMPLQSQRPHSESYRMLPEPEKFKSEYGYPSQFLPIEKLTSNVAYPPNYNNYLKSPYQQPTNFPPEIQYNYSHSPQHSIQEAEEAAVYGPPVYRSGYQILYNNNTDSIAAAAATHDLYPQPDVPLTFAMLADGNYVPLPSSTNTYGPSNSYGYEININESTNHVDSSYLPHPIQLSNYFTLPSSCAQADAACQCGDNCECLGCLTHPNNATTLAALNHISALEKETISHTDLHHTFKHEVNSSNNYELTNDELAASSPLYTSSSVPPSHITTGST</sequence>
<comment type="function">
    <text evidence="3 4">Copper-sensing transcription factor that regulates iron uptake genes. Under copper starvation conditions activates the transcription of the copper transport genes, ctr4, ctr5 and ctr6.</text>
</comment>
<comment type="subcellular location">
    <subcellularLocation>
        <location evidence="4">Cytoplasm</location>
    </subcellularLocation>
    <subcellularLocation>
        <location evidence="4">Nucleus</location>
    </subcellularLocation>
    <text>Cytoplasmic in presence of excess copper ions. The Cys-His motif (328-342) interacts with the N-terminal nuclear localization signal region leading to sequestration in the cytoplasm. Nuclear under copper starvation conditions.</text>
</comment>
<gene>
    <name type="primary">cuf1</name>
    <name type="ORF">SPAC31A2.11c</name>
</gene>
<feature type="chain" id="PRO_0000194930" description="Metal-binding regulatory protein cuf1">
    <location>
        <begin position="1"/>
        <end position="411"/>
    </location>
</feature>
<feature type="DNA-binding region" description="Copper-fist" evidence="1">
    <location>
        <begin position="1"/>
        <end position="40"/>
    </location>
</feature>
<feature type="region of interest" description="Disordered" evidence="2">
    <location>
        <begin position="63"/>
        <end position="92"/>
    </location>
</feature>
<feature type="compositionally biased region" description="Low complexity" evidence="2">
    <location>
        <begin position="69"/>
        <end position="92"/>
    </location>
</feature>
<feature type="binding site" evidence="1">
    <location>
        <position position="11"/>
    </location>
    <ligand>
        <name>Zn(2+)</name>
        <dbReference type="ChEBI" id="CHEBI:29105"/>
    </ligand>
</feature>
<feature type="binding site" evidence="1">
    <location>
        <position position="14"/>
    </location>
    <ligand>
        <name>Zn(2+)</name>
        <dbReference type="ChEBI" id="CHEBI:29105"/>
    </ligand>
</feature>
<feature type="binding site" evidence="1">
    <location>
        <position position="23"/>
    </location>
    <ligand>
        <name>Zn(2+)</name>
        <dbReference type="ChEBI" id="CHEBI:29105"/>
    </ligand>
</feature>
<feature type="binding site" evidence="1">
    <location>
        <position position="25"/>
    </location>
    <ligand>
        <name>Zn(2+)</name>
        <dbReference type="ChEBI" id="CHEBI:29105"/>
    </ligand>
</feature>
<feature type="mutagenesis site" description="No nuclear localization." evidence="4">
    <original>K</original>
    <variation>A</variation>
    <location>
        <position position="13"/>
    </location>
</feature>
<feature type="mutagenesis site" description="No nuclear localization." evidence="4">
    <original>R</original>
    <variation>A</variation>
    <location>
        <position position="16"/>
    </location>
</feature>
<feature type="mutagenesis site" description="No nuclear localization." evidence="4">
    <original>R</original>
    <variation>A</variation>
    <location>
        <position position="19"/>
    </location>
</feature>
<feature type="mutagenesis site" description="No nuclear localization." evidence="4">
    <original>K</original>
    <variation>A</variation>
    <location>
        <position position="24"/>
    </location>
</feature>
<feature type="mutagenesis site" description="No nuclear localization." evidence="4">
    <original>R</original>
    <variation>A</variation>
    <location>
        <position position="28"/>
    </location>
</feature>
<feature type="mutagenesis site" description="No nuclear localization." evidence="4">
    <original>K</original>
    <variation>A</variation>
    <location>
        <position position="45"/>
    </location>
</feature>
<feature type="mutagenesis site" description="No nuclear localization." evidence="4">
    <original>R</original>
    <variation>A</variation>
    <location>
        <position position="47"/>
    </location>
</feature>
<feature type="mutagenesis site" description="No nuclear localization." evidence="4">
    <original>R</original>
    <variation>A</variation>
    <location>
        <position position="50"/>
    </location>
</feature>
<feature type="mutagenesis site" description="No nuclear localization." evidence="4">
    <original>R</original>
    <variation>A</variation>
    <location>
        <position position="53"/>
    </location>
</feature>
<feature type="mutagenesis site" description="Constitutive nuclear localization." evidence="4">
    <original>C</original>
    <variation>A</variation>
    <location>
        <position position="328"/>
    </location>
</feature>
<feature type="mutagenesis site" description="Constitutive nuclear localization." evidence="4">
    <original>C</original>
    <variation>A</variation>
    <location>
        <position position="330"/>
    </location>
</feature>
<feature type="mutagenesis site" description="Constitutive nuclear localization." evidence="4">
    <original>C</original>
    <variation>A</variation>
    <location>
        <position position="334"/>
    </location>
</feature>
<feature type="mutagenesis site" description="Constitutive nuclear localization." evidence="4">
    <original>C</original>
    <variation>A</variation>
    <location>
        <position position="336"/>
    </location>
</feature>
<feature type="mutagenesis site" description="Constitutive nuclear localization." evidence="4">
    <original>C</original>
    <variation>A</variation>
    <location>
        <position position="339"/>
    </location>
</feature>
<organism>
    <name type="scientific">Schizosaccharomyces pombe (strain 972 / ATCC 24843)</name>
    <name type="common">Fission yeast</name>
    <dbReference type="NCBI Taxonomy" id="284812"/>
    <lineage>
        <taxon>Eukaryota</taxon>
        <taxon>Fungi</taxon>
        <taxon>Dikarya</taxon>
        <taxon>Ascomycota</taxon>
        <taxon>Taphrinomycotina</taxon>
        <taxon>Schizosaccharomycetes</taxon>
        <taxon>Schizosaccharomycetales</taxon>
        <taxon>Schizosaccharomycetaceae</taxon>
        <taxon>Schizosaccharomyces</taxon>
    </lineage>
</organism>
<accession>Q09728</accession>